<protein>
    <recommendedName>
        <fullName evidence="1">Phosphoglucosamine mutase</fullName>
        <ecNumber evidence="1">5.4.2.10</ecNumber>
    </recommendedName>
</protein>
<accession>Q5FL35</accession>
<dbReference type="EC" id="5.4.2.10" evidence="1"/>
<dbReference type="EMBL" id="CP000033">
    <property type="protein sequence ID" value="AAV42589.1"/>
    <property type="molecule type" value="Genomic_DNA"/>
</dbReference>
<dbReference type="RefSeq" id="WP_003546635.1">
    <property type="nucleotide sequence ID" value="NC_006814.3"/>
</dbReference>
<dbReference type="RefSeq" id="YP_193620.1">
    <property type="nucleotide sequence ID" value="NC_006814.3"/>
</dbReference>
<dbReference type="SMR" id="Q5FL35"/>
<dbReference type="STRING" id="272621.LBA0716"/>
<dbReference type="GeneID" id="93290158"/>
<dbReference type="KEGG" id="lac:LBA0716"/>
<dbReference type="PATRIC" id="fig|272621.13.peg.684"/>
<dbReference type="eggNOG" id="COG1109">
    <property type="taxonomic scope" value="Bacteria"/>
</dbReference>
<dbReference type="HOGENOM" id="CLU_016950_7_0_9"/>
<dbReference type="OrthoDB" id="9806956at2"/>
<dbReference type="BioCyc" id="LACI272621:G1G49-736-MONOMER"/>
<dbReference type="Proteomes" id="UP000006381">
    <property type="component" value="Chromosome"/>
</dbReference>
<dbReference type="GO" id="GO:0005829">
    <property type="term" value="C:cytosol"/>
    <property type="evidence" value="ECO:0007669"/>
    <property type="project" value="TreeGrafter"/>
</dbReference>
<dbReference type="GO" id="GO:0000287">
    <property type="term" value="F:magnesium ion binding"/>
    <property type="evidence" value="ECO:0007669"/>
    <property type="project" value="UniProtKB-UniRule"/>
</dbReference>
<dbReference type="GO" id="GO:0008966">
    <property type="term" value="F:phosphoglucosamine mutase activity"/>
    <property type="evidence" value="ECO:0007669"/>
    <property type="project" value="UniProtKB-UniRule"/>
</dbReference>
<dbReference type="GO" id="GO:0004615">
    <property type="term" value="F:phosphomannomutase activity"/>
    <property type="evidence" value="ECO:0007669"/>
    <property type="project" value="TreeGrafter"/>
</dbReference>
<dbReference type="GO" id="GO:0005975">
    <property type="term" value="P:carbohydrate metabolic process"/>
    <property type="evidence" value="ECO:0007669"/>
    <property type="project" value="InterPro"/>
</dbReference>
<dbReference type="GO" id="GO:0009252">
    <property type="term" value="P:peptidoglycan biosynthetic process"/>
    <property type="evidence" value="ECO:0007669"/>
    <property type="project" value="TreeGrafter"/>
</dbReference>
<dbReference type="GO" id="GO:0006048">
    <property type="term" value="P:UDP-N-acetylglucosamine biosynthetic process"/>
    <property type="evidence" value="ECO:0007669"/>
    <property type="project" value="TreeGrafter"/>
</dbReference>
<dbReference type="CDD" id="cd05802">
    <property type="entry name" value="GlmM"/>
    <property type="match status" value="1"/>
</dbReference>
<dbReference type="FunFam" id="3.30.310.50:FF:000001">
    <property type="entry name" value="Phosphoglucosamine mutase"/>
    <property type="match status" value="1"/>
</dbReference>
<dbReference type="FunFam" id="3.40.120.10:FF:000001">
    <property type="entry name" value="Phosphoglucosamine mutase"/>
    <property type="match status" value="1"/>
</dbReference>
<dbReference type="FunFam" id="3.40.120.10:FF:000002">
    <property type="entry name" value="Phosphoglucosamine mutase"/>
    <property type="match status" value="1"/>
</dbReference>
<dbReference type="Gene3D" id="3.40.120.10">
    <property type="entry name" value="Alpha-D-Glucose-1,6-Bisphosphate, subunit A, domain 3"/>
    <property type="match status" value="3"/>
</dbReference>
<dbReference type="Gene3D" id="3.30.310.50">
    <property type="entry name" value="Alpha-D-phosphohexomutase, C-terminal domain"/>
    <property type="match status" value="1"/>
</dbReference>
<dbReference type="HAMAP" id="MF_01554_B">
    <property type="entry name" value="GlmM_B"/>
    <property type="match status" value="1"/>
</dbReference>
<dbReference type="InterPro" id="IPR005844">
    <property type="entry name" value="A-D-PHexomutase_a/b/a-I"/>
</dbReference>
<dbReference type="InterPro" id="IPR016055">
    <property type="entry name" value="A-D-PHexomutase_a/b/a-I/II/III"/>
</dbReference>
<dbReference type="InterPro" id="IPR005845">
    <property type="entry name" value="A-D-PHexomutase_a/b/a-II"/>
</dbReference>
<dbReference type="InterPro" id="IPR005846">
    <property type="entry name" value="A-D-PHexomutase_a/b/a-III"/>
</dbReference>
<dbReference type="InterPro" id="IPR005843">
    <property type="entry name" value="A-D-PHexomutase_C"/>
</dbReference>
<dbReference type="InterPro" id="IPR036900">
    <property type="entry name" value="A-D-PHexomutase_C_sf"/>
</dbReference>
<dbReference type="InterPro" id="IPR016066">
    <property type="entry name" value="A-D-PHexomutase_CS"/>
</dbReference>
<dbReference type="InterPro" id="IPR005841">
    <property type="entry name" value="Alpha-D-phosphohexomutase_SF"/>
</dbReference>
<dbReference type="InterPro" id="IPR006352">
    <property type="entry name" value="GlmM_bact"/>
</dbReference>
<dbReference type="InterPro" id="IPR050060">
    <property type="entry name" value="Phosphoglucosamine_mutase"/>
</dbReference>
<dbReference type="NCBIfam" id="TIGR01455">
    <property type="entry name" value="glmM"/>
    <property type="match status" value="1"/>
</dbReference>
<dbReference type="PANTHER" id="PTHR42946:SF1">
    <property type="entry name" value="PHOSPHOGLUCOMUTASE (ALPHA-D-GLUCOSE-1,6-BISPHOSPHATE-DEPENDENT)"/>
    <property type="match status" value="1"/>
</dbReference>
<dbReference type="PANTHER" id="PTHR42946">
    <property type="entry name" value="PHOSPHOHEXOSE MUTASE"/>
    <property type="match status" value="1"/>
</dbReference>
<dbReference type="Pfam" id="PF02878">
    <property type="entry name" value="PGM_PMM_I"/>
    <property type="match status" value="1"/>
</dbReference>
<dbReference type="Pfam" id="PF02879">
    <property type="entry name" value="PGM_PMM_II"/>
    <property type="match status" value="1"/>
</dbReference>
<dbReference type="Pfam" id="PF02880">
    <property type="entry name" value="PGM_PMM_III"/>
    <property type="match status" value="1"/>
</dbReference>
<dbReference type="Pfam" id="PF00408">
    <property type="entry name" value="PGM_PMM_IV"/>
    <property type="match status" value="1"/>
</dbReference>
<dbReference type="PRINTS" id="PR00509">
    <property type="entry name" value="PGMPMM"/>
</dbReference>
<dbReference type="SUPFAM" id="SSF55957">
    <property type="entry name" value="Phosphoglucomutase, C-terminal domain"/>
    <property type="match status" value="1"/>
</dbReference>
<dbReference type="SUPFAM" id="SSF53738">
    <property type="entry name" value="Phosphoglucomutase, first 3 domains"/>
    <property type="match status" value="3"/>
</dbReference>
<dbReference type="PROSITE" id="PS00710">
    <property type="entry name" value="PGM_PMM"/>
    <property type="match status" value="1"/>
</dbReference>
<proteinExistence type="inferred from homology"/>
<keyword id="KW-0413">Isomerase</keyword>
<keyword id="KW-0460">Magnesium</keyword>
<keyword id="KW-0479">Metal-binding</keyword>
<keyword id="KW-0597">Phosphoprotein</keyword>
<keyword id="KW-1185">Reference proteome</keyword>
<comment type="function">
    <text evidence="1">Catalyzes the conversion of glucosamine-6-phosphate to glucosamine-1-phosphate.</text>
</comment>
<comment type="catalytic activity">
    <reaction evidence="1">
        <text>alpha-D-glucosamine 1-phosphate = D-glucosamine 6-phosphate</text>
        <dbReference type="Rhea" id="RHEA:23424"/>
        <dbReference type="ChEBI" id="CHEBI:58516"/>
        <dbReference type="ChEBI" id="CHEBI:58725"/>
        <dbReference type="EC" id="5.4.2.10"/>
    </reaction>
</comment>
<comment type="cofactor">
    <cofactor evidence="1">
        <name>Mg(2+)</name>
        <dbReference type="ChEBI" id="CHEBI:18420"/>
    </cofactor>
    <text evidence="1">Binds 1 Mg(2+) ion per subunit.</text>
</comment>
<comment type="PTM">
    <text evidence="1">Activated by phosphorylation.</text>
</comment>
<comment type="similarity">
    <text evidence="1">Belongs to the phosphohexose mutase family.</text>
</comment>
<sequence length="452" mass="49169">MLKYFGTDGVRGVANQGLTPEMAFKLGRDGGYVLTKNKKDGEQAKVLVSRDTRISGQMLEYALISGLLSVGIEVLEVGVITTPGLSYLVRAQGADAGIQISASHNPVEDNGIKFFGSDGLKLSDEMEGEIEKLIDAEEDTLPRPSAEGLGTVTDFHEGSAKYLQFIENTIPEELDGIKVVIDGANGASSALISRLFADCGVDFTTIYTHPNGLNINDHCGATHTENLQKEVVKQGAQLGLAFDGDADRCIAVDENGNEVDGDHIMYVIGSYLAEHGRLKKDTIVTTVMSNLGFTKALEKEDLKNVRTQVGDRYVSEEMRAHGYNLGGEQSGHVIMSDYHNTGDGMLTGLHLMLVMKKTGKSLSELLKDFKDYPQCLVNVPVTDKKSWKEHQPILDVIAEVEKDMAGNGRVLVRPSGTQDLLRVMAEGPTQEETDAYVDRIVKVVEKEMGTNK</sequence>
<name>GLMM_LACAC</name>
<reference key="1">
    <citation type="journal article" date="2005" name="Proc. Natl. Acad. Sci. U.S.A.">
        <title>Complete genome sequence of the probiotic lactic acid bacterium Lactobacillus acidophilus NCFM.</title>
        <authorList>
            <person name="Altermann E."/>
            <person name="Russell W.M."/>
            <person name="Azcarate-Peril M.A."/>
            <person name="Barrangou R."/>
            <person name="Buck B.L."/>
            <person name="McAuliffe O."/>
            <person name="Souther N."/>
            <person name="Dobson A."/>
            <person name="Duong T."/>
            <person name="Callanan M."/>
            <person name="Lick S."/>
            <person name="Hamrick A."/>
            <person name="Cano R."/>
            <person name="Klaenhammer T.R."/>
        </authorList>
    </citation>
    <scope>NUCLEOTIDE SEQUENCE [LARGE SCALE GENOMIC DNA]</scope>
    <source>
        <strain>ATCC 700396 / NCK56 / N2 / NCFM</strain>
    </source>
</reference>
<gene>
    <name evidence="1" type="primary">glmM</name>
    <name type="ordered locus">LBA0716</name>
</gene>
<feature type="chain" id="PRO_0000147902" description="Phosphoglucosamine mutase">
    <location>
        <begin position="1"/>
        <end position="452"/>
    </location>
</feature>
<feature type="active site" description="Phosphoserine intermediate" evidence="1">
    <location>
        <position position="103"/>
    </location>
</feature>
<feature type="binding site" description="via phosphate group" evidence="1">
    <location>
        <position position="103"/>
    </location>
    <ligand>
        <name>Mg(2+)</name>
        <dbReference type="ChEBI" id="CHEBI:18420"/>
    </ligand>
</feature>
<feature type="binding site" evidence="1">
    <location>
        <position position="243"/>
    </location>
    <ligand>
        <name>Mg(2+)</name>
        <dbReference type="ChEBI" id="CHEBI:18420"/>
    </ligand>
</feature>
<feature type="binding site" evidence="1">
    <location>
        <position position="245"/>
    </location>
    <ligand>
        <name>Mg(2+)</name>
        <dbReference type="ChEBI" id="CHEBI:18420"/>
    </ligand>
</feature>
<feature type="binding site" evidence="1">
    <location>
        <position position="247"/>
    </location>
    <ligand>
        <name>Mg(2+)</name>
        <dbReference type="ChEBI" id="CHEBI:18420"/>
    </ligand>
</feature>
<feature type="modified residue" description="Phosphoserine" evidence="1">
    <location>
        <position position="103"/>
    </location>
</feature>
<evidence type="ECO:0000255" key="1">
    <source>
        <dbReference type="HAMAP-Rule" id="MF_01554"/>
    </source>
</evidence>
<organism>
    <name type="scientific">Lactobacillus acidophilus (strain ATCC 700396 / NCK56 / N2 / NCFM)</name>
    <dbReference type="NCBI Taxonomy" id="272621"/>
    <lineage>
        <taxon>Bacteria</taxon>
        <taxon>Bacillati</taxon>
        <taxon>Bacillota</taxon>
        <taxon>Bacilli</taxon>
        <taxon>Lactobacillales</taxon>
        <taxon>Lactobacillaceae</taxon>
        <taxon>Lactobacillus</taxon>
    </lineage>
</organism>